<organism>
    <name type="scientific">Methanocaldococcus jannaschii (strain ATCC 43067 / DSM 2661 / JAL-1 / JCM 10045 / NBRC 100440)</name>
    <name type="common">Methanococcus jannaschii</name>
    <dbReference type="NCBI Taxonomy" id="243232"/>
    <lineage>
        <taxon>Archaea</taxon>
        <taxon>Methanobacteriati</taxon>
        <taxon>Methanobacteriota</taxon>
        <taxon>Methanomada group</taxon>
        <taxon>Methanococci</taxon>
        <taxon>Methanococcales</taxon>
        <taxon>Methanocaldococcaceae</taxon>
        <taxon>Methanocaldococcus</taxon>
    </lineage>
</organism>
<geneLocation type="plasmid">
    <name>large ECE</name>
</geneLocation>
<accession>Q60273</accession>
<reference key="1">
    <citation type="journal article" date="1996" name="Science">
        <title>Complete genome sequence of the methanogenic archaeon, Methanococcus jannaschii.</title>
        <authorList>
            <person name="Bult C.J."/>
            <person name="White O."/>
            <person name="Olsen G.J."/>
            <person name="Zhou L."/>
            <person name="Fleischmann R.D."/>
            <person name="Sutton G.G."/>
            <person name="Blake J.A."/>
            <person name="FitzGerald L.M."/>
            <person name="Clayton R.A."/>
            <person name="Gocayne J.D."/>
            <person name="Kerlavage A.R."/>
            <person name="Dougherty B.A."/>
            <person name="Tomb J.-F."/>
            <person name="Adams M.D."/>
            <person name="Reich C.I."/>
            <person name="Overbeek R."/>
            <person name="Kirkness E.F."/>
            <person name="Weinstock K.G."/>
            <person name="Merrick J.M."/>
            <person name="Glodek A."/>
            <person name="Scott J.L."/>
            <person name="Geoghagen N.S.M."/>
            <person name="Weidman J.F."/>
            <person name="Fuhrmann J.L."/>
            <person name="Nguyen D."/>
            <person name="Utterback T.R."/>
            <person name="Kelley J.M."/>
            <person name="Peterson J.D."/>
            <person name="Sadow P.W."/>
            <person name="Hanna M.C."/>
            <person name="Cotton M.D."/>
            <person name="Roberts K.M."/>
            <person name="Hurst M.A."/>
            <person name="Kaine B.P."/>
            <person name="Borodovsky M."/>
            <person name="Klenk H.-P."/>
            <person name="Fraser C.M."/>
            <person name="Smith H.O."/>
            <person name="Woese C.R."/>
            <person name="Venter J.C."/>
        </authorList>
    </citation>
    <scope>NUCLEOTIDE SEQUENCE [LARGE SCALE GENOMIC DNA]</scope>
    <source>
        <strain>ATCC 43067 / DSM 2661 / JAL-1 / JCM 10045 / NBRC 100440</strain>
    </source>
</reference>
<feature type="chain" id="PRO_0000107503" description="Uncharacterized protein MJECL11">
    <location>
        <begin position="1"/>
        <end position="114"/>
    </location>
</feature>
<protein>
    <recommendedName>
        <fullName>Uncharacterized protein MJECL11</fullName>
    </recommendedName>
</protein>
<dbReference type="EMBL" id="L77118">
    <property type="protein sequence ID" value="AAC37084.1"/>
    <property type="molecule type" value="Genomic_DNA"/>
</dbReference>
<dbReference type="PIR" id="C64511">
    <property type="entry name" value="C64511"/>
</dbReference>
<dbReference type="PaxDb" id="243232-MJ_ECL11"/>
<dbReference type="EnsemblBacteria" id="AAC37084">
    <property type="protein sequence ID" value="AAC37084"/>
    <property type="gene ID" value="MJ_ECL11"/>
</dbReference>
<dbReference type="KEGG" id="mja:MJ_ECL11"/>
<dbReference type="eggNOG" id="arCOG03239">
    <property type="taxonomic scope" value="Archaea"/>
</dbReference>
<dbReference type="HOGENOM" id="CLU_2115497_0_0_2"/>
<dbReference type="InParanoid" id="Q60273"/>
<dbReference type="OrthoDB" id="25344at2157"/>
<dbReference type="Proteomes" id="UP000000805">
    <property type="component" value="Plasmid pDSM2661_1"/>
</dbReference>
<dbReference type="Gene3D" id="3.40.50.300">
    <property type="entry name" value="P-loop containing nucleotide triphosphate hydrolases"/>
    <property type="match status" value="1"/>
</dbReference>
<dbReference type="InterPro" id="IPR051396">
    <property type="entry name" value="Bact_Antivir_Def_Nuclease"/>
</dbReference>
<dbReference type="InterPro" id="IPR027417">
    <property type="entry name" value="P-loop_NTPase"/>
</dbReference>
<dbReference type="PANTHER" id="PTHR43581">
    <property type="entry name" value="ATP/GTP PHOSPHATASE"/>
    <property type="match status" value="1"/>
</dbReference>
<dbReference type="PANTHER" id="PTHR43581:SF4">
    <property type="entry name" value="ATP_GTP PHOSPHATASE"/>
    <property type="match status" value="1"/>
</dbReference>
<dbReference type="SUPFAM" id="SSF52540">
    <property type="entry name" value="P-loop containing nucleoside triphosphate hydrolases"/>
    <property type="match status" value="1"/>
</dbReference>
<sequence>MGEGFKSALIIALLTSILKNGYLLIDSAEAFHHPSSLEITSQMLTKSVKNNNVQVFLTTHSLELIDFLLEHASKEGIEGRLIYMRRDGENLISSMESFENVREMRETLGIDLRG</sequence>
<gene>
    <name type="ordered locus">MJECL11</name>
</gene>
<name>Y3511_METJA</name>
<keyword id="KW-0614">Plasmid</keyword>
<keyword id="KW-1185">Reference proteome</keyword>
<proteinExistence type="predicted"/>